<keyword id="KW-0694">RNA-binding</keyword>
<keyword id="KW-0804">Transcription</keyword>
<keyword id="KW-0889">Transcription antitermination</keyword>
<keyword id="KW-0805">Transcription regulation</keyword>
<organism>
    <name type="scientific">Hamiltonella defensa subsp. Acyrthosiphon pisum (strain 5AT)</name>
    <dbReference type="NCBI Taxonomy" id="572265"/>
    <lineage>
        <taxon>Bacteria</taxon>
        <taxon>Pseudomonadati</taxon>
        <taxon>Pseudomonadota</taxon>
        <taxon>Gammaproteobacteria</taxon>
        <taxon>Enterobacterales</taxon>
        <taxon>Enterobacteriaceae</taxon>
        <taxon>aphid secondary symbionts</taxon>
        <taxon>Candidatus Hamiltonella</taxon>
    </lineage>
</organism>
<accession>C4K7H4</accession>
<protein>
    <recommendedName>
        <fullName evidence="1">Transcription antitermination protein NusB</fullName>
    </recommendedName>
    <alternativeName>
        <fullName evidence="1">Antitermination factor NusB</fullName>
    </alternativeName>
</protein>
<evidence type="ECO:0000255" key="1">
    <source>
        <dbReference type="HAMAP-Rule" id="MF_00073"/>
    </source>
</evidence>
<dbReference type="EMBL" id="CP001277">
    <property type="protein sequence ID" value="ACQ68517.1"/>
    <property type="molecule type" value="Genomic_DNA"/>
</dbReference>
<dbReference type="RefSeq" id="WP_015874279.1">
    <property type="nucleotide sequence ID" value="NC_012751.1"/>
</dbReference>
<dbReference type="SMR" id="C4K7H4"/>
<dbReference type="STRING" id="572265.HDEF_1929"/>
<dbReference type="GeneID" id="66261504"/>
<dbReference type="KEGG" id="hde:HDEF_1929"/>
<dbReference type="eggNOG" id="COG0781">
    <property type="taxonomic scope" value="Bacteria"/>
</dbReference>
<dbReference type="HOGENOM" id="CLU_087843_4_1_6"/>
<dbReference type="Proteomes" id="UP000002334">
    <property type="component" value="Chromosome"/>
</dbReference>
<dbReference type="GO" id="GO:0005829">
    <property type="term" value="C:cytosol"/>
    <property type="evidence" value="ECO:0007669"/>
    <property type="project" value="TreeGrafter"/>
</dbReference>
<dbReference type="GO" id="GO:0003723">
    <property type="term" value="F:RNA binding"/>
    <property type="evidence" value="ECO:0007669"/>
    <property type="project" value="UniProtKB-UniRule"/>
</dbReference>
<dbReference type="GO" id="GO:0006353">
    <property type="term" value="P:DNA-templated transcription termination"/>
    <property type="evidence" value="ECO:0007669"/>
    <property type="project" value="UniProtKB-UniRule"/>
</dbReference>
<dbReference type="GO" id="GO:0031564">
    <property type="term" value="P:transcription antitermination"/>
    <property type="evidence" value="ECO:0007669"/>
    <property type="project" value="UniProtKB-KW"/>
</dbReference>
<dbReference type="CDD" id="cd00619">
    <property type="entry name" value="Terminator_NusB"/>
    <property type="match status" value="1"/>
</dbReference>
<dbReference type="FunFam" id="1.10.940.10:FF:000001">
    <property type="entry name" value="Transcription antitermination factor NusB"/>
    <property type="match status" value="1"/>
</dbReference>
<dbReference type="Gene3D" id="1.10.940.10">
    <property type="entry name" value="NusB-like"/>
    <property type="match status" value="1"/>
</dbReference>
<dbReference type="HAMAP" id="MF_00073">
    <property type="entry name" value="NusB"/>
    <property type="match status" value="1"/>
</dbReference>
<dbReference type="InterPro" id="IPR035926">
    <property type="entry name" value="NusB-like_sf"/>
</dbReference>
<dbReference type="InterPro" id="IPR011605">
    <property type="entry name" value="NusB_fam"/>
</dbReference>
<dbReference type="InterPro" id="IPR006027">
    <property type="entry name" value="NusB_RsmB_TIM44"/>
</dbReference>
<dbReference type="NCBIfam" id="TIGR01951">
    <property type="entry name" value="nusB"/>
    <property type="match status" value="1"/>
</dbReference>
<dbReference type="PANTHER" id="PTHR11078:SF3">
    <property type="entry name" value="ANTITERMINATION NUSB DOMAIN-CONTAINING PROTEIN"/>
    <property type="match status" value="1"/>
</dbReference>
<dbReference type="PANTHER" id="PTHR11078">
    <property type="entry name" value="N UTILIZATION SUBSTANCE PROTEIN B-RELATED"/>
    <property type="match status" value="1"/>
</dbReference>
<dbReference type="Pfam" id="PF01029">
    <property type="entry name" value="NusB"/>
    <property type="match status" value="1"/>
</dbReference>
<dbReference type="SUPFAM" id="SSF48013">
    <property type="entry name" value="NusB-like"/>
    <property type="match status" value="1"/>
</dbReference>
<feature type="chain" id="PRO_1000202483" description="Transcription antitermination protein NusB">
    <location>
        <begin position="1"/>
        <end position="151"/>
    </location>
</feature>
<sequence>MNPSARRRARECVVQALYAWQVSQNDIAEVELSFLADQETQGADIAYFRHVLLGVASDVEALDTLMTPYLSRQFQELGQIEKAILRLAMFELNKRDDVPYKVTINEAIELGKTFGADDSHKFINGVLDKAAPIIRKRMQIRSQNGPYQSVC</sequence>
<comment type="function">
    <text evidence="1">Involved in transcription antitermination. Required for transcription of ribosomal RNA (rRNA) genes. Binds specifically to the boxA antiterminator sequence of the ribosomal RNA (rrn) operons.</text>
</comment>
<comment type="similarity">
    <text evidence="1">Belongs to the NusB family.</text>
</comment>
<reference key="1">
    <citation type="journal article" date="2009" name="Proc. Natl. Acad. Sci. U.S.A.">
        <title>Hamiltonella defensa, genome evolution of protective bacterial endosymbiont from pathogenic ancestors.</title>
        <authorList>
            <person name="Degnan P.H."/>
            <person name="Yu Y."/>
            <person name="Sisneros N."/>
            <person name="Wing R.A."/>
            <person name="Moran N.A."/>
        </authorList>
    </citation>
    <scope>NUCLEOTIDE SEQUENCE [LARGE SCALE GENOMIC DNA]</scope>
    <source>
        <strain>5AT</strain>
    </source>
</reference>
<name>NUSB_HAMD5</name>
<gene>
    <name evidence="1" type="primary">nusB</name>
    <name type="ordered locus">HDEF_1929</name>
</gene>
<proteinExistence type="inferred from homology"/>